<feature type="chain" id="PRO_0000287997" description="Energy-coupling factor transporter ATP-binding protein EcfA1">
    <location>
        <begin position="1"/>
        <end position="279"/>
    </location>
</feature>
<feature type="domain" description="ABC transporter" evidence="1">
    <location>
        <begin position="5"/>
        <end position="240"/>
    </location>
</feature>
<feature type="binding site" evidence="1">
    <location>
        <begin position="40"/>
        <end position="47"/>
    </location>
    <ligand>
        <name>ATP</name>
        <dbReference type="ChEBI" id="CHEBI:30616"/>
    </ligand>
</feature>
<evidence type="ECO:0000255" key="1">
    <source>
        <dbReference type="HAMAP-Rule" id="MF_01710"/>
    </source>
</evidence>
<evidence type="ECO:0000305" key="2"/>
<dbReference type="EC" id="7.-.-.-" evidence="1"/>
<dbReference type="EMBL" id="CP000259">
    <property type="protein sequence ID" value="ABF33044.1"/>
    <property type="status" value="ALT_INIT"/>
    <property type="molecule type" value="Genomic_DNA"/>
</dbReference>
<dbReference type="RefSeq" id="WP_014407975.1">
    <property type="nucleotide sequence ID" value="NC_008021.1"/>
</dbReference>
<dbReference type="SMR" id="Q1JJC9"/>
<dbReference type="KEGG" id="spk:MGAS9429_Spy1857"/>
<dbReference type="HOGENOM" id="CLU_000604_1_22_9"/>
<dbReference type="Proteomes" id="UP000002433">
    <property type="component" value="Chromosome"/>
</dbReference>
<dbReference type="GO" id="GO:0043190">
    <property type="term" value="C:ATP-binding cassette (ABC) transporter complex"/>
    <property type="evidence" value="ECO:0007669"/>
    <property type="project" value="TreeGrafter"/>
</dbReference>
<dbReference type="GO" id="GO:0005524">
    <property type="term" value="F:ATP binding"/>
    <property type="evidence" value="ECO:0007669"/>
    <property type="project" value="UniProtKB-KW"/>
</dbReference>
<dbReference type="GO" id="GO:0016887">
    <property type="term" value="F:ATP hydrolysis activity"/>
    <property type="evidence" value="ECO:0007669"/>
    <property type="project" value="InterPro"/>
</dbReference>
<dbReference type="GO" id="GO:0042626">
    <property type="term" value="F:ATPase-coupled transmembrane transporter activity"/>
    <property type="evidence" value="ECO:0007669"/>
    <property type="project" value="TreeGrafter"/>
</dbReference>
<dbReference type="CDD" id="cd03225">
    <property type="entry name" value="ABC_cobalt_CbiO_domain1"/>
    <property type="match status" value="1"/>
</dbReference>
<dbReference type="FunFam" id="3.40.50.300:FF:000224">
    <property type="entry name" value="Energy-coupling factor transporter ATP-binding protein EcfA"/>
    <property type="match status" value="1"/>
</dbReference>
<dbReference type="Gene3D" id="3.40.50.300">
    <property type="entry name" value="P-loop containing nucleotide triphosphate hydrolases"/>
    <property type="match status" value="1"/>
</dbReference>
<dbReference type="InterPro" id="IPR003593">
    <property type="entry name" value="AAA+_ATPase"/>
</dbReference>
<dbReference type="InterPro" id="IPR003439">
    <property type="entry name" value="ABC_transporter-like_ATP-bd"/>
</dbReference>
<dbReference type="InterPro" id="IPR017871">
    <property type="entry name" value="ABC_transporter-like_CS"/>
</dbReference>
<dbReference type="InterPro" id="IPR015856">
    <property type="entry name" value="ABC_transpr_CbiO/EcfA_su"/>
</dbReference>
<dbReference type="InterPro" id="IPR050095">
    <property type="entry name" value="ECF_ABC_transporter_ATP-bd"/>
</dbReference>
<dbReference type="InterPro" id="IPR030947">
    <property type="entry name" value="EcfA_1"/>
</dbReference>
<dbReference type="InterPro" id="IPR027417">
    <property type="entry name" value="P-loop_NTPase"/>
</dbReference>
<dbReference type="NCBIfam" id="TIGR04520">
    <property type="entry name" value="ECF_ATPase_1"/>
    <property type="match status" value="1"/>
</dbReference>
<dbReference type="NCBIfam" id="NF010156">
    <property type="entry name" value="PRK13635.1"/>
    <property type="match status" value="1"/>
</dbReference>
<dbReference type="NCBIfam" id="NF010167">
    <property type="entry name" value="PRK13648.1"/>
    <property type="match status" value="1"/>
</dbReference>
<dbReference type="PANTHER" id="PTHR43553:SF24">
    <property type="entry name" value="ENERGY-COUPLING FACTOR TRANSPORTER ATP-BINDING PROTEIN ECFA1"/>
    <property type="match status" value="1"/>
</dbReference>
<dbReference type="PANTHER" id="PTHR43553">
    <property type="entry name" value="HEAVY METAL TRANSPORTER"/>
    <property type="match status" value="1"/>
</dbReference>
<dbReference type="Pfam" id="PF00005">
    <property type="entry name" value="ABC_tran"/>
    <property type="match status" value="1"/>
</dbReference>
<dbReference type="SMART" id="SM00382">
    <property type="entry name" value="AAA"/>
    <property type="match status" value="1"/>
</dbReference>
<dbReference type="SUPFAM" id="SSF52540">
    <property type="entry name" value="P-loop containing nucleoside triphosphate hydrolases"/>
    <property type="match status" value="1"/>
</dbReference>
<dbReference type="PROSITE" id="PS00211">
    <property type="entry name" value="ABC_TRANSPORTER_1"/>
    <property type="match status" value="1"/>
</dbReference>
<dbReference type="PROSITE" id="PS50893">
    <property type="entry name" value="ABC_TRANSPORTER_2"/>
    <property type="match status" value="1"/>
</dbReference>
<dbReference type="PROSITE" id="PS51246">
    <property type="entry name" value="CBIO"/>
    <property type="match status" value="1"/>
</dbReference>
<proteinExistence type="inferred from homology"/>
<protein>
    <recommendedName>
        <fullName evidence="1">Energy-coupling factor transporter ATP-binding protein EcfA1</fullName>
        <shortName evidence="1">ECF transporter A component EcfA1</shortName>
        <ecNumber evidence="1">7.-.-.-</ecNumber>
    </recommendedName>
</protein>
<sequence>MSAIIELKKVTFNYHKDQEKPTLDGVSFHVKQGEWLSIIGHNGSGKSTTIRLIDGLLEPESGSIIVDGDLLTITNVWEIRHKIGMVFQNPDNQFVGATVEDDVAFGLENKGIAHEDIKERVNHALELVGMQNFKEKEPARLSGGQKQRVAIAGAVAMKPKIIILDEATSMLDPKGRLELIKTIKNIRDDYQLTVISITHDLDEVALSDRVLVMKDGQVESTSTPEQLFARGDELLQLGLDIPFTTSVVQMLQEEGYPVDYGYLTEKELENQLCQLISKM</sequence>
<organism>
    <name type="scientific">Streptococcus pyogenes serotype M12 (strain MGAS9429)</name>
    <dbReference type="NCBI Taxonomy" id="370551"/>
    <lineage>
        <taxon>Bacteria</taxon>
        <taxon>Bacillati</taxon>
        <taxon>Bacillota</taxon>
        <taxon>Bacilli</taxon>
        <taxon>Lactobacillales</taxon>
        <taxon>Streptococcaceae</taxon>
        <taxon>Streptococcus</taxon>
    </lineage>
</organism>
<gene>
    <name evidence="1" type="primary">ecfA1</name>
    <name type="synonym">cbiO1</name>
    <name type="ordered locus">MGAS9429_Spy1857</name>
</gene>
<keyword id="KW-0067">ATP-binding</keyword>
<keyword id="KW-1003">Cell membrane</keyword>
<keyword id="KW-0472">Membrane</keyword>
<keyword id="KW-0547">Nucleotide-binding</keyword>
<keyword id="KW-1278">Translocase</keyword>
<keyword id="KW-0813">Transport</keyword>
<name>ECFA1_STRPC</name>
<comment type="function">
    <text evidence="1">ATP-binding (A) component of a common energy-coupling factor (ECF) ABC-transporter complex. Unlike classic ABC transporters this ECF transporter provides the energy necessary to transport a number of different substrates.</text>
</comment>
<comment type="subunit">
    <text evidence="1">Forms a stable energy-coupling factor (ECF) transporter complex composed of 2 membrane-embedded substrate-binding proteins (S component), 2 ATP-binding proteins (A component) and 2 transmembrane proteins (T component).</text>
</comment>
<comment type="subcellular location">
    <subcellularLocation>
        <location evidence="1">Cell membrane</location>
        <topology evidence="1">Peripheral membrane protein</topology>
    </subcellularLocation>
</comment>
<comment type="similarity">
    <text evidence="1">Belongs to the ABC transporter superfamily. Energy-coupling factor EcfA family.</text>
</comment>
<comment type="sequence caution" evidence="2">
    <conflict type="erroneous initiation">
        <sequence resource="EMBL-CDS" id="ABF33044"/>
    </conflict>
    <text>Extended N-terminus.</text>
</comment>
<reference key="1">
    <citation type="journal article" date="2006" name="Proc. Natl. Acad. Sci. U.S.A.">
        <title>Molecular genetic anatomy of inter- and intraserotype variation in the human bacterial pathogen group A Streptococcus.</title>
        <authorList>
            <person name="Beres S.B."/>
            <person name="Richter E.W."/>
            <person name="Nagiec M.J."/>
            <person name="Sumby P."/>
            <person name="Porcella S.F."/>
            <person name="DeLeo F.R."/>
            <person name="Musser J.M."/>
        </authorList>
    </citation>
    <scope>NUCLEOTIDE SEQUENCE [LARGE SCALE GENOMIC DNA]</scope>
    <source>
        <strain>MGAS9429</strain>
    </source>
</reference>
<accession>Q1JJC9</accession>